<evidence type="ECO:0000255" key="1">
    <source>
        <dbReference type="HAMAP-Rule" id="MF_00296"/>
    </source>
</evidence>
<protein>
    <recommendedName>
        <fullName evidence="1">Homoserine O-succinyltransferase</fullName>
        <shortName evidence="1">HST</shortName>
        <ecNumber evidence="1">2.3.1.46</ecNumber>
    </recommendedName>
    <alternativeName>
        <fullName evidence="1">Homoserine transsuccinylase</fullName>
        <shortName evidence="1">HTS</shortName>
    </alternativeName>
</protein>
<gene>
    <name evidence="1" type="primary">metXS</name>
    <name type="ordered locus">HEAR0152</name>
</gene>
<reference key="1">
    <citation type="journal article" date="2007" name="PLoS Genet.">
        <title>A tale of two oxidation states: bacterial colonization of arsenic-rich environments.</title>
        <authorList>
            <person name="Muller D."/>
            <person name="Medigue C."/>
            <person name="Koechler S."/>
            <person name="Barbe V."/>
            <person name="Barakat M."/>
            <person name="Talla E."/>
            <person name="Bonnefoy V."/>
            <person name="Krin E."/>
            <person name="Arsene-Ploetze F."/>
            <person name="Carapito C."/>
            <person name="Chandler M."/>
            <person name="Cournoyer B."/>
            <person name="Cruveiller S."/>
            <person name="Dossat C."/>
            <person name="Duval S."/>
            <person name="Heymann M."/>
            <person name="Leize E."/>
            <person name="Lieutaud A."/>
            <person name="Lievremont D."/>
            <person name="Makita Y."/>
            <person name="Mangenot S."/>
            <person name="Nitschke W."/>
            <person name="Ortet P."/>
            <person name="Perdrial N."/>
            <person name="Schoepp B."/>
            <person name="Siguier P."/>
            <person name="Simeonova D.D."/>
            <person name="Rouy Z."/>
            <person name="Segurens B."/>
            <person name="Turlin E."/>
            <person name="Vallenet D."/>
            <person name="van Dorsselaer A."/>
            <person name="Weiss S."/>
            <person name="Weissenbach J."/>
            <person name="Lett M.-C."/>
            <person name="Danchin A."/>
            <person name="Bertin P.N."/>
        </authorList>
    </citation>
    <scope>NUCLEOTIDE SEQUENCE [LARGE SCALE GENOMIC DNA]</scope>
    <source>
        <strain>ULPAs1</strain>
    </source>
</reference>
<sequence>MTSLGIVTPQSMFFSTPLPLQSGAEITDYTLVYETYGTLNADHSNAVLVCHALNASHHVAGSYSEDASTRGWWDNMVGPGKPLDTDKFFVIGVNNLGSCFGSTGPMHANPATGKPYGPQFPVVTVEDWVQSQARLADALGIRQFAAVMGGSLGGMQALAWSILFPERLRHCVVIASTPKLTAQNIAFDDVARQAILTDPDYHGGDYYAHGVVPKNGLRVARMLGHITYLSDDDMAVKFGRDLRSGSYQFGFGIDFEIESYLRYQGDKFSEYFDANTYLLITKALDYFDPAKDFGGDLTKTLSHTRAQFLLVSFSTDWRFAPERSHEMVQALVNNKRMVTYAEIDASHGHDAFLLDDARYMSVVRAYYERVYKEIDGGSLKAGAQV</sequence>
<keyword id="KW-0012">Acyltransferase</keyword>
<keyword id="KW-0028">Amino-acid biosynthesis</keyword>
<keyword id="KW-0963">Cytoplasm</keyword>
<keyword id="KW-0486">Methionine biosynthesis</keyword>
<keyword id="KW-1185">Reference proteome</keyword>
<keyword id="KW-0808">Transferase</keyword>
<feature type="chain" id="PRO_1000115226" description="Homoserine O-succinyltransferase">
    <location>
        <begin position="1"/>
        <end position="385"/>
    </location>
</feature>
<feature type="domain" description="AB hydrolase-1" evidence="1">
    <location>
        <begin position="45"/>
        <end position="355"/>
    </location>
</feature>
<feature type="active site" description="Nucleophile" evidence="1">
    <location>
        <position position="151"/>
    </location>
</feature>
<feature type="active site" evidence="1">
    <location>
        <position position="316"/>
    </location>
</feature>
<feature type="active site" evidence="1">
    <location>
        <position position="349"/>
    </location>
</feature>
<feature type="binding site" evidence="1">
    <location>
        <position position="221"/>
    </location>
    <ligand>
        <name>substrate</name>
    </ligand>
</feature>
<feature type="binding site" evidence="1">
    <location>
        <position position="350"/>
    </location>
    <ligand>
        <name>substrate</name>
    </ligand>
</feature>
<feature type="site" description="Important for acyl-CoA specificity" evidence="1">
    <location>
        <position position="318"/>
    </location>
</feature>
<dbReference type="EC" id="2.3.1.46" evidence="1"/>
<dbReference type="EMBL" id="CU207211">
    <property type="protein sequence ID" value="CAL60387.2"/>
    <property type="molecule type" value="Genomic_DNA"/>
</dbReference>
<dbReference type="SMR" id="A4G1K0"/>
<dbReference type="STRING" id="204773.HEAR0152"/>
<dbReference type="ESTHER" id="herar-metx">
    <property type="family name" value="Homoserine_transacetylase"/>
</dbReference>
<dbReference type="KEGG" id="har:HEAR0152"/>
<dbReference type="eggNOG" id="COG2021">
    <property type="taxonomic scope" value="Bacteria"/>
</dbReference>
<dbReference type="HOGENOM" id="CLU_028760_1_2_4"/>
<dbReference type="OrthoDB" id="9800754at2"/>
<dbReference type="UniPathway" id="UPA00051">
    <property type="reaction ID" value="UER00075"/>
</dbReference>
<dbReference type="Proteomes" id="UP000006697">
    <property type="component" value="Chromosome"/>
</dbReference>
<dbReference type="GO" id="GO:0005737">
    <property type="term" value="C:cytoplasm"/>
    <property type="evidence" value="ECO:0007669"/>
    <property type="project" value="UniProtKB-SubCell"/>
</dbReference>
<dbReference type="GO" id="GO:0004414">
    <property type="term" value="F:homoserine O-acetyltransferase activity"/>
    <property type="evidence" value="ECO:0007669"/>
    <property type="project" value="TreeGrafter"/>
</dbReference>
<dbReference type="GO" id="GO:0008899">
    <property type="term" value="F:homoserine O-succinyltransferase activity"/>
    <property type="evidence" value="ECO:0007669"/>
    <property type="project" value="UniProtKB-UniRule"/>
</dbReference>
<dbReference type="GO" id="GO:0009092">
    <property type="term" value="P:homoserine metabolic process"/>
    <property type="evidence" value="ECO:0007669"/>
    <property type="project" value="TreeGrafter"/>
</dbReference>
<dbReference type="GO" id="GO:0009086">
    <property type="term" value="P:methionine biosynthetic process"/>
    <property type="evidence" value="ECO:0007669"/>
    <property type="project" value="UniProtKB-UniRule"/>
</dbReference>
<dbReference type="FunFam" id="1.10.1740.110:FF:000001">
    <property type="entry name" value="Homoserine O-acetyltransferase"/>
    <property type="match status" value="1"/>
</dbReference>
<dbReference type="Gene3D" id="1.10.1740.110">
    <property type="match status" value="1"/>
</dbReference>
<dbReference type="Gene3D" id="3.40.50.1820">
    <property type="entry name" value="alpha/beta hydrolase"/>
    <property type="match status" value="1"/>
</dbReference>
<dbReference type="HAMAP" id="MF_00296">
    <property type="entry name" value="MetX_acyltransf"/>
    <property type="match status" value="1"/>
</dbReference>
<dbReference type="InterPro" id="IPR000073">
    <property type="entry name" value="AB_hydrolase_1"/>
</dbReference>
<dbReference type="InterPro" id="IPR029058">
    <property type="entry name" value="AB_hydrolase_fold"/>
</dbReference>
<dbReference type="InterPro" id="IPR008220">
    <property type="entry name" value="HAT_MetX-like"/>
</dbReference>
<dbReference type="NCBIfam" id="TIGR01392">
    <property type="entry name" value="homoserO_Ac_trn"/>
    <property type="match status" value="1"/>
</dbReference>
<dbReference type="NCBIfam" id="NF001209">
    <property type="entry name" value="PRK00175.1"/>
    <property type="match status" value="1"/>
</dbReference>
<dbReference type="PANTHER" id="PTHR32268">
    <property type="entry name" value="HOMOSERINE O-ACETYLTRANSFERASE"/>
    <property type="match status" value="1"/>
</dbReference>
<dbReference type="PANTHER" id="PTHR32268:SF11">
    <property type="entry name" value="HOMOSERINE O-ACETYLTRANSFERASE"/>
    <property type="match status" value="1"/>
</dbReference>
<dbReference type="Pfam" id="PF00561">
    <property type="entry name" value="Abhydrolase_1"/>
    <property type="match status" value="1"/>
</dbReference>
<dbReference type="PIRSF" id="PIRSF000443">
    <property type="entry name" value="Homoser_Ac_trans"/>
    <property type="match status" value="1"/>
</dbReference>
<dbReference type="SUPFAM" id="SSF53474">
    <property type="entry name" value="alpha/beta-Hydrolases"/>
    <property type="match status" value="1"/>
</dbReference>
<organism>
    <name type="scientific">Herminiimonas arsenicoxydans</name>
    <dbReference type="NCBI Taxonomy" id="204773"/>
    <lineage>
        <taxon>Bacteria</taxon>
        <taxon>Pseudomonadati</taxon>
        <taxon>Pseudomonadota</taxon>
        <taxon>Betaproteobacteria</taxon>
        <taxon>Burkholderiales</taxon>
        <taxon>Oxalobacteraceae</taxon>
        <taxon>Herminiimonas</taxon>
    </lineage>
</organism>
<comment type="function">
    <text evidence="1">Transfers a succinyl group from succinyl-CoA to L-homoserine, forming succinyl-L-homoserine.</text>
</comment>
<comment type="catalytic activity">
    <reaction evidence="1">
        <text>L-homoserine + succinyl-CoA = O-succinyl-L-homoserine + CoA</text>
        <dbReference type="Rhea" id="RHEA:22008"/>
        <dbReference type="ChEBI" id="CHEBI:57287"/>
        <dbReference type="ChEBI" id="CHEBI:57292"/>
        <dbReference type="ChEBI" id="CHEBI:57476"/>
        <dbReference type="ChEBI" id="CHEBI:57661"/>
        <dbReference type="EC" id="2.3.1.46"/>
    </reaction>
</comment>
<comment type="pathway">
    <text evidence="1">Amino-acid biosynthesis; L-methionine biosynthesis via de novo pathway; O-succinyl-L-homoserine from L-homoserine: step 1/1.</text>
</comment>
<comment type="subunit">
    <text evidence="1">Homodimer.</text>
</comment>
<comment type="subcellular location">
    <subcellularLocation>
        <location evidence="1">Cytoplasm</location>
    </subcellularLocation>
</comment>
<comment type="similarity">
    <text evidence="1">Belongs to the AB hydrolase superfamily. MetX family.</text>
</comment>
<accession>A4G1K0</accession>
<name>METXS_HERAR</name>
<proteinExistence type="inferred from homology"/>